<proteinExistence type="evidence at protein level"/>
<reference key="1">
    <citation type="journal article" date="1999" name="Nature">
        <title>The DNA sequence of human chromosome 22.</title>
        <authorList>
            <person name="Dunham I."/>
            <person name="Hunt A.R."/>
            <person name="Collins J.E."/>
            <person name="Bruskiewich R."/>
            <person name="Beare D.M."/>
            <person name="Clamp M."/>
            <person name="Smink L.J."/>
            <person name="Ainscough R."/>
            <person name="Almeida J.P."/>
            <person name="Babbage A.K."/>
            <person name="Bagguley C."/>
            <person name="Bailey J."/>
            <person name="Barlow K.F."/>
            <person name="Bates K.N."/>
            <person name="Beasley O.P."/>
            <person name="Bird C.P."/>
            <person name="Blakey S.E."/>
            <person name="Bridgeman A.M."/>
            <person name="Buck D."/>
            <person name="Burgess J."/>
            <person name="Burrill W.D."/>
            <person name="Burton J."/>
            <person name="Carder C."/>
            <person name="Carter N.P."/>
            <person name="Chen Y."/>
            <person name="Clark G."/>
            <person name="Clegg S.M."/>
            <person name="Cobley V.E."/>
            <person name="Cole C.G."/>
            <person name="Collier R.E."/>
            <person name="Connor R."/>
            <person name="Conroy D."/>
            <person name="Corby N.R."/>
            <person name="Coville G.J."/>
            <person name="Cox A.V."/>
            <person name="Davis J."/>
            <person name="Dawson E."/>
            <person name="Dhami P.D."/>
            <person name="Dockree C."/>
            <person name="Dodsworth S.J."/>
            <person name="Durbin R.M."/>
            <person name="Ellington A.G."/>
            <person name="Evans K.L."/>
            <person name="Fey J.M."/>
            <person name="Fleming K."/>
            <person name="French L."/>
            <person name="Garner A.A."/>
            <person name="Gilbert J.G.R."/>
            <person name="Goward M.E."/>
            <person name="Grafham D.V."/>
            <person name="Griffiths M.N.D."/>
            <person name="Hall C."/>
            <person name="Hall R.E."/>
            <person name="Hall-Tamlyn G."/>
            <person name="Heathcott R.W."/>
            <person name="Ho S."/>
            <person name="Holmes S."/>
            <person name="Hunt S.E."/>
            <person name="Jones M.C."/>
            <person name="Kershaw J."/>
            <person name="Kimberley A.M."/>
            <person name="King A."/>
            <person name="Laird G.K."/>
            <person name="Langford C.F."/>
            <person name="Leversha M.A."/>
            <person name="Lloyd C."/>
            <person name="Lloyd D.M."/>
            <person name="Martyn I.D."/>
            <person name="Mashreghi-Mohammadi M."/>
            <person name="Matthews L.H."/>
            <person name="Mccann O.T."/>
            <person name="Mcclay J."/>
            <person name="Mclaren S."/>
            <person name="McMurray A.A."/>
            <person name="Milne S.A."/>
            <person name="Mortimore B.J."/>
            <person name="Odell C.N."/>
            <person name="Pavitt R."/>
            <person name="Pearce A.V."/>
            <person name="Pearson D."/>
            <person name="Phillimore B.J.C.T."/>
            <person name="Phillips S.H."/>
            <person name="Plumb R.W."/>
            <person name="Ramsay H."/>
            <person name="Ramsey Y."/>
            <person name="Rogers L."/>
            <person name="Ross M.T."/>
            <person name="Scott C.E."/>
            <person name="Sehra H.K."/>
            <person name="Skuce C.D."/>
            <person name="Smalley S."/>
            <person name="Smith M.L."/>
            <person name="Soderlund C."/>
            <person name="Spragon L."/>
            <person name="Steward C.A."/>
            <person name="Sulston J.E."/>
            <person name="Swann R.M."/>
            <person name="Vaudin M."/>
            <person name="Wall M."/>
            <person name="Wallis J.M."/>
            <person name="Whiteley M.N."/>
            <person name="Willey D.L."/>
            <person name="Williams L."/>
            <person name="Williams S.A."/>
            <person name="Williamson H."/>
            <person name="Wilmer T.E."/>
            <person name="Wilming L."/>
            <person name="Wright C.L."/>
            <person name="Hubbard T."/>
            <person name="Bentley D.R."/>
            <person name="Beck S."/>
            <person name="Rogers J."/>
            <person name="Shimizu N."/>
            <person name="Minoshima S."/>
            <person name="Kawasaki K."/>
            <person name="Sasaki T."/>
            <person name="Asakawa S."/>
            <person name="Kudoh J."/>
            <person name="Shintani A."/>
            <person name="Shibuya K."/>
            <person name="Yoshizaki Y."/>
            <person name="Aoki N."/>
            <person name="Mitsuyama S."/>
            <person name="Roe B.A."/>
            <person name="Chen F."/>
            <person name="Chu L."/>
            <person name="Crabtree J."/>
            <person name="Deschamps S."/>
            <person name="Do A."/>
            <person name="Do T."/>
            <person name="Dorman A."/>
            <person name="Fang F."/>
            <person name="Fu Y."/>
            <person name="Hu P."/>
            <person name="Hua A."/>
            <person name="Kenton S."/>
            <person name="Lai H."/>
            <person name="Lao H.I."/>
            <person name="Lewis J."/>
            <person name="Lewis S."/>
            <person name="Lin S.-P."/>
            <person name="Loh P."/>
            <person name="Malaj E."/>
            <person name="Nguyen T."/>
            <person name="Pan H."/>
            <person name="Phan S."/>
            <person name="Qi S."/>
            <person name="Qian Y."/>
            <person name="Ray L."/>
            <person name="Ren Q."/>
            <person name="Shaull S."/>
            <person name="Sloan D."/>
            <person name="Song L."/>
            <person name="Wang Q."/>
            <person name="Wang Y."/>
            <person name="Wang Z."/>
            <person name="White J."/>
            <person name="Willingham D."/>
            <person name="Wu H."/>
            <person name="Yao Z."/>
            <person name="Zhan M."/>
            <person name="Zhang G."/>
            <person name="Chissoe S."/>
            <person name="Murray J."/>
            <person name="Miller N."/>
            <person name="Minx P."/>
            <person name="Fulton R."/>
            <person name="Johnson D."/>
            <person name="Bemis G."/>
            <person name="Bentley D."/>
            <person name="Bradshaw H."/>
            <person name="Bourne S."/>
            <person name="Cordes M."/>
            <person name="Du Z."/>
            <person name="Fulton L."/>
            <person name="Goela D."/>
            <person name="Graves T."/>
            <person name="Hawkins J."/>
            <person name="Hinds K."/>
            <person name="Kemp K."/>
            <person name="Latreille P."/>
            <person name="Layman D."/>
            <person name="Ozersky P."/>
            <person name="Rohlfing T."/>
            <person name="Scheet P."/>
            <person name="Walker C."/>
            <person name="Wamsley A."/>
            <person name="Wohldmann P."/>
            <person name="Pepin K."/>
            <person name="Nelson J."/>
            <person name="Korf I."/>
            <person name="Bedell J.A."/>
            <person name="Hillier L.W."/>
            <person name="Mardis E."/>
            <person name="Waterston R."/>
            <person name="Wilson R."/>
            <person name="Emanuel B.S."/>
            <person name="Shaikh T."/>
            <person name="Kurahashi H."/>
            <person name="Saitta S."/>
            <person name="Budarf M.L."/>
            <person name="McDermid H.E."/>
            <person name="Johnson A."/>
            <person name="Wong A.C.C."/>
            <person name="Morrow B.E."/>
            <person name="Edelmann L."/>
            <person name="Kim U.J."/>
            <person name="Shizuya H."/>
            <person name="Simon M.I."/>
            <person name="Dumanski J.P."/>
            <person name="Peyrard M."/>
            <person name="Kedra D."/>
            <person name="Seroussi E."/>
            <person name="Fransson I."/>
            <person name="Tapia I."/>
            <person name="Bruder C.E."/>
            <person name="O'Brien K.P."/>
            <person name="Wilkinson P."/>
            <person name="Bodenteich A."/>
            <person name="Hartman K."/>
            <person name="Hu X."/>
            <person name="Khan A.S."/>
            <person name="Lane L."/>
            <person name="Tilahun Y."/>
            <person name="Wright H."/>
        </authorList>
    </citation>
    <scope>NUCLEOTIDE SEQUENCE [LARGE SCALE GENOMIC DNA]</scope>
</reference>
<reference key="2">
    <citation type="journal article" date="2004" name="Genome Res.">
        <title>The status, quality, and expansion of the NIH full-length cDNA project: the Mammalian Gene Collection (MGC).</title>
        <authorList>
            <consortium name="The MGC Project Team"/>
        </authorList>
    </citation>
    <scope>NUCLEOTIDE SEQUENCE [LARGE SCALE MRNA]</scope>
    <source>
        <tissue>Testis</tissue>
    </source>
</reference>
<reference key="3">
    <citation type="journal article" date="2011" name="J. Biol. Chem.">
        <title>DENN domain proteins: regulators of Rab GTPases.</title>
        <authorList>
            <person name="Marat A.L."/>
            <person name="Dokainish H."/>
            <person name="McPherson P.S."/>
        </authorList>
    </citation>
    <scope>IDENTIFICATION</scope>
</reference>
<reference key="4">
    <citation type="journal article" date="2012" name="Dev. Cell">
        <title>Rab14 and its exchange factor FAM116 link endocytic recycling and adherens junction stability in migrating cells.</title>
        <authorList>
            <person name="Linford A."/>
            <person name="Yoshimura S."/>
            <person name="Nunes Bastos R."/>
            <person name="Langemeyer L."/>
            <person name="Gerondopoulos A."/>
            <person name="Rigden D.J."/>
            <person name="Barr F.A."/>
        </authorList>
    </citation>
    <scope>FUNCTION</scope>
</reference>
<accession>Q8NEG7</accession>
<accession>A6X8I5</accession>
<dbReference type="EMBL" id="CT009622">
    <property type="protein sequence ID" value="CAO03304.1"/>
    <property type="molecule type" value="Genomic_DNA"/>
</dbReference>
<dbReference type="EMBL" id="CR559946">
    <property type="protein sequence ID" value="CAO03304.1"/>
    <property type="status" value="JOINED"/>
    <property type="molecule type" value="Genomic_DNA"/>
</dbReference>
<dbReference type="EMBL" id="CR759740">
    <property type="protein sequence ID" value="CAO03304.1"/>
    <property type="status" value="JOINED"/>
    <property type="molecule type" value="Genomic_DNA"/>
</dbReference>
<dbReference type="EMBL" id="CR932343">
    <property type="protein sequence ID" value="CAO03304.1"/>
    <property type="status" value="JOINED"/>
    <property type="molecule type" value="Genomic_DNA"/>
</dbReference>
<dbReference type="EMBL" id="CR932344">
    <property type="protein sequence ID" value="CAO03304.1"/>
    <property type="status" value="JOINED"/>
    <property type="molecule type" value="Genomic_DNA"/>
</dbReference>
<dbReference type="EMBL" id="CR932344">
    <property type="protein sequence ID" value="CAO03484.1"/>
    <property type="molecule type" value="Genomic_DNA"/>
</dbReference>
<dbReference type="EMBL" id="CR559946">
    <property type="protein sequence ID" value="CAO03484.1"/>
    <property type="status" value="JOINED"/>
    <property type="molecule type" value="Genomic_DNA"/>
</dbReference>
<dbReference type="EMBL" id="CR759740">
    <property type="protein sequence ID" value="CAO03484.1"/>
    <property type="status" value="JOINED"/>
    <property type="molecule type" value="Genomic_DNA"/>
</dbReference>
<dbReference type="EMBL" id="CR932343">
    <property type="protein sequence ID" value="CAO03484.1"/>
    <property type="status" value="JOINED"/>
    <property type="molecule type" value="Genomic_DNA"/>
</dbReference>
<dbReference type="EMBL" id="CT009622">
    <property type="protein sequence ID" value="CAO03484.1"/>
    <property type="status" value="JOINED"/>
    <property type="molecule type" value="Genomic_DNA"/>
</dbReference>
<dbReference type="EMBL" id="CR559946">
    <property type="protein sequence ID" value="CAO03525.1"/>
    <property type="molecule type" value="Genomic_DNA"/>
</dbReference>
<dbReference type="EMBL" id="CR759740">
    <property type="protein sequence ID" value="CAO03525.1"/>
    <property type="status" value="JOINED"/>
    <property type="molecule type" value="Genomic_DNA"/>
</dbReference>
<dbReference type="EMBL" id="CR932343">
    <property type="protein sequence ID" value="CAO03525.1"/>
    <property type="status" value="JOINED"/>
    <property type="molecule type" value="Genomic_DNA"/>
</dbReference>
<dbReference type="EMBL" id="CR932344">
    <property type="protein sequence ID" value="CAO03525.1"/>
    <property type="status" value="JOINED"/>
    <property type="molecule type" value="Genomic_DNA"/>
</dbReference>
<dbReference type="EMBL" id="CT009622">
    <property type="protein sequence ID" value="CAO03525.1"/>
    <property type="status" value="JOINED"/>
    <property type="molecule type" value="Genomic_DNA"/>
</dbReference>
<dbReference type="EMBL" id="CR932343">
    <property type="protein sequence ID" value="CAO03579.1"/>
    <property type="molecule type" value="Genomic_DNA"/>
</dbReference>
<dbReference type="EMBL" id="CR559946">
    <property type="protein sequence ID" value="CAO03579.1"/>
    <property type="status" value="JOINED"/>
    <property type="molecule type" value="Genomic_DNA"/>
</dbReference>
<dbReference type="EMBL" id="CR759740">
    <property type="protein sequence ID" value="CAO03579.1"/>
    <property type="status" value="JOINED"/>
    <property type="molecule type" value="Genomic_DNA"/>
</dbReference>
<dbReference type="EMBL" id="CR932344">
    <property type="protein sequence ID" value="CAO03579.1"/>
    <property type="status" value="JOINED"/>
    <property type="molecule type" value="Genomic_DNA"/>
</dbReference>
<dbReference type="EMBL" id="CT009622">
    <property type="protein sequence ID" value="CAO03579.1"/>
    <property type="status" value="JOINED"/>
    <property type="molecule type" value="Genomic_DNA"/>
</dbReference>
<dbReference type="EMBL" id="CR759740">
    <property type="protein sequence ID" value="CAO03621.1"/>
    <property type="molecule type" value="Genomic_DNA"/>
</dbReference>
<dbReference type="EMBL" id="CR559946">
    <property type="protein sequence ID" value="CAO03621.1"/>
    <property type="status" value="JOINED"/>
    <property type="molecule type" value="Genomic_DNA"/>
</dbReference>
<dbReference type="EMBL" id="CR932343">
    <property type="protein sequence ID" value="CAO03621.1"/>
    <property type="status" value="JOINED"/>
    <property type="molecule type" value="Genomic_DNA"/>
</dbReference>
<dbReference type="EMBL" id="CR932344">
    <property type="protein sequence ID" value="CAO03621.1"/>
    <property type="status" value="JOINED"/>
    <property type="molecule type" value="Genomic_DNA"/>
</dbReference>
<dbReference type="EMBL" id="CT009622">
    <property type="protein sequence ID" value="CAO03621.1"/>
    <property type="status" value="JOINED"/>
    <property type="molecule type" value="Genomic_DNA"/>
</dbReference>
<dbReference type="EMBL" id="BC031069">
    <property type="protein sequence ID" value="AAH31069.1"/>
    <property type="molecule type" value="mRNA"/>
</dbReference>
<dbReference type="CCDS" id="CCDS46732.1"/>
<dbReference type="RefSeq" id="NP_001001794.3">
    <property type="nucleotide sequence ID" value="NM_001001794.4"/>
</dbReference>
<dbReference type="BioGRID" id="136098">
    <property type="interactions" value="11"/>
</dbReference>
<dbReference type="FunCoup" id="Q8NEG7">
    <property type="interactions" value="2044"/>
</dbReference>
<dbReference type="IntAct" id="Q8NEG7">
    <property type="interactions" value="9"/>
</dbReference>
<dbReference type="STRING" id="9606.ENSP00000391524"/>
<dbReference type="GlyGen" id="Q8NEG7">
    <property type="glycosylation" value="1 site"/>
</dbReference>
<dbReference type="iPTMnet" id="Q8NEG7"/>
<dbReference type="PhosphoSitePlus" id="Q8NEG7"/>
<dbReference type="BioMuta" id="DENND6B"/>
<dbReference type="DMDM" id="74760209"/>
<dbReference type="jPOST" id="Q8NEG7"/>
<dbReference type="MassIVE" id="Q8NEG7"/>
<dbReference type="PaxDb" id="9606-ENSP00000391524"/>
<dbReference type="PeptideAtlas" id="Q8NEG7"/>
<dbReference type="ProteomicsDB" id="73165"/>
<dbReference type="Pumba" id="Q8NEG7"/>
<dbReference type="Antibodypedia" id="6832">
    <property type="antibodies" value="44 antibodies from 16 providers"/>
</dbReference>
<dbReference type="DNASU" id="414918"/>
<dbReference type="Ensembl" id="ENST00000413817.8">
    <property type="protein sequence ID" value="ENSP00000391524.2"/>
    <property type="gene ID" value="ENSG00000205593.12"/>
</dbReference>
<dbReference type="GeneID" id="414918"/>
<dbReference type="KEGG" id="hsa:414918"/>
<dbReference type="MANE-Select" id="ENST00000413817.8">
    <property type="protein sequence ID" value="ENSP00000391524.2"/>
    <property type="RefSeq nucleotide sequence ID" value="NM_001001794.4"/>
    <property type="RefSeq protein sequence ID" value="NP_001001794.3"/>
</dbReference>
<dbReference type="UCSC" id="uc011arv.2">
    <property type="organism name" value="human"/>
</dbReference>
<dbReference type="AGR" id="HGNC:32690"/>
<dbReference type="CTD" id="414918"/>
<dbReference type="DisGeNET" id="414918"/>
<dbReference type="GeneCards" id="DENND6B"/>
<dbReference type="HGNC" id="HGNC:32690">
    <property type="gene designation" value="DENND6B"/>
</dbReference>
<dbReference type="HPA" id="ENSG00000205593">
    <property type="expression patterns" value="Tissue enhanced (brain)"/>
</dbReference>
<dbReference type="MIM" id="620562">
    <property type="type" value="gene"/>
</dbReference>
<dbReference type="neXtProt" id="NX_Q8NEG7"/>
<dbReference type="OpenTargets" id="ENSG00000205593"/>
<dbReference type="PharmGKB" id="PA144596432"/>
<dbReference type="VEuPathDB" id="HostDB:ENSG00000205593"/>
<dbReference type="eggNOG" id="KOG2432">
    <property type="taxonomic scope" value="Eukaryota"/>
</dbReference>
<dbReference type="GeneTree" id="ENSGT00390000005529"/>
<dbReference type="HOGENOM" id="CLU_017013_0_1_1"/>
<dbReference type="InParanoid" id="Q8NEG7"/>
<dbReference type="OMA" id="CIPSRVD"/>
<dbReference type="OrthoDB" id="10265409at2759"/>
<dbReference type="PAN-GO" id="Q8NEG7">
    <property type="GO annotations" value="1 GO annotation based on evolutionary models"/>
</dbReference>
<dbReference type="PhylomeDB" id="Q8NEG7"/>
<dbReference type="TreeFam" id="TF320228"/>
<dbReference type="PathwayCommons" id="Q8NEG7"/>
<dbReference type="Reactome" id="R-HSA-8876198">
    <property type="pathway name" value="RAB GEFs exchange GTP for GDP on RABs"/>
</dbReference>
<dbReference type="SignaLink" id="Q8NEG7"/>
<dbReference type="BioGRID-ORCS" id="414918">
    <property type="hits" value="13 hits in 1157 CRISPR screens"/>
</dbReference>
<dbReference type="GenomeRNAi" id="414918"/>
<dbReference type="Pharos" id="Q8NEG7">
    <property type="development level" value="Tbio"/>
</dbReference>
<dbReference type="PRO" id="PR:Q8NEG7"/>
<dbReference type="Proteomes" id="UP000005640">
    <property type="component" value="Chromosome 22"/>
</dbReference>
<dbReference type="RNAct" id="Q8NEG7">
    <property type="molecule type" value="protein"/>
</dbReference>
<dbReference type="Bgee" id="ENSG00000205593">
    <property type="expression patterns" value="Expressed in right uterine tube and 111 other cell types or tissues"/>
</dbReference>
<dbReference type="ExpressionAtlas" id="Q8NEG7">
    <property type="expression patterns" value="baseline and differential"/>
</dbReference>
<dbReference type="GO" id="GO:0005829">
    <property type="term" value="C:cytosol"/>
    <property type="evidence" value="ECO:0000304"/>
    <property type="project" value="Reactome"/>
</dbReference>
<dbReference type="GO" id="GO:0055037">
    <property type="term" value="C:recycling endosome"/>
    <property type="evidence" value="ECO:0000318"/>
    <property type="project" value="GO_Central"/>
</dbReference>
<dbReference type="GO" id="GO:0005085">
    <property type="term" value="F:guanyl-nucleotide exchange factor activity"/>
    <property type="evidence" value="ECO:0000314"/>
    <property type="project" value="UniProtKB"/>
</dbReference>
<dbReference type="InterPro" id="IPR001194">
    <property type="entry name" value="cDENN_dom"/>
</dbReference>
<dbReference type="InterPro" id="IPR024224">
    <property type="entry name" value="DENND6"/>
</dbReference>
<dbReference type="InterPro" id="IPR037516">
    <property type="entry name" value="Tripartite_DENN"/>
</dbReference>
<dbReference type="PANTHER" id="PTHR13677">
    <property type="entry name" value="LD41638P"/>
    <property type="match status" value="1"/>
</dbReference>
<dbReference type="PANTHER" id="PTHR13677:SF2">
    <property type="entry name" value="PROTEIN DENND6B"/>
    <property type="match status" value="1"/>
</dbReference>
<dbReference type="Pfam" id="PF02141">
    <property type="entry name" value="DENN"/>
    <property type="match status" value="1"/>
</dbReference>
<dbReference type="PROSITE" id="PS50211">
    <property type="entry name" value="DENN"/>
    <property type="match status" value="1"/>
</dbReference>
<keyword id="KW-0963">Cytoplasm</keyword>
<keyword id="KW-0967">Endosome</keyword>
<keyword id="KW-0344">Guanine-nucleotide releasing factor</keyword>
<keyword id="KW-1267">Proteomics identification</keyword>
<keyword id="KW-1185">Reference proteome</keyword>
<evidence type="ECO:0000255" key="1">
    <source>
        <dbReference type="PROSITE-ProRule" id="PRU00304"/>
    </source>
</evidence>
<evidence type="ECO:0000269" key="2">
    <source>
    </source>
</evidence>
<evidence type="ECO:0000305" key="3"/>
<evidence type="ECO:0000305" key="4">
    <source>
    </source>
</evidence>
<organism>
    <name type="scientific">Homo sapiens</name>
    <name type="common">Human</name>
    <dbReference type="NCBI Taxonomy" id="9606"/>
    <lineage>
        <taxon>Eukaryota</taxon>
        <taxon>Metazoa</taxon>
        <taxon>Chordata</taxon>
        <taxon>Craniata</taxon>
        <taxon>Vertebrata</taxon>
        <taxon>Euteleostomi</taxon>
        <taxon>Mammalia</taxon>
        <taxon>Eutheria</taxon>
        <taxon>Euarchontoglires</taxon>
        <taxon>Primates</taxon>
        <taxon>Haplorrhini</taxon>
        <taxon>Catarrhini</taxon>
        <taxon>Hominidae</taxon>
        <taxon>Homo</taxon>
    </lineage>
</organism>
<name>DEN6B_HUMAN</name>
<gene>
    <name type="primary">DENND6B</name>
    <name type="synonym">FAM116B</name>
</gene>
<protein>
    <recommendedName>
        <fullName>Protein DENND6B</fullName>
    </recommendedName>
    <alternativeName>
        <fullName>DENN domain-containing protein 6B</fullName>
    </alternativeName>
</protein>
<feature type="chain" id="PRO_0000264990" description="Protein DENND6B">
    <location>
        <begin position="1"/>
        <end position="585"/>
    </location>
</feature>
<feature type="domain" description="uDENN" evidence="1">
    <location>
        <begin position="43"/>
        <end position="214"/>
    </location>
</feature>
<feature type="domain" description="cDENN" evidence="1">
    <location>
        <begin position="246"/>
        <end position="373"/>
    </location>
</feature>
<feature type="domain" description="dDENN" evidence="1">
    <location>
        <begin position="375"/>
        <end position="499"/>
    </location>
</feature>
<sequence>MDALLGTGPRRARGCLGAAGPTSSGRAARTPAAPWARFSAWLECVCVVTFDLELGQALELVYPNDFRLTDKEKSSICYLSFPDSHSGCLGDTQFSFRMRQCGGQRSPWHADDRHYNSRAPVALQREPAHYFGYVYFRQVKDSSVKRGYFQKSLVLVSRLPFVRLFQALLSLIAPEYFDKLAPCLEAVCSEIDQWPAPAPGQTLNLPVMGVVVQVRIPSRVDKSESSPPKQFDQENLLPAPVVLASVHELDLFRCFRPVLTHMQTLWELMLLGEPLLVLAPSPDVSSEMVLALTSCLQPLRFCCDFRPYFTIHDSEFKEFTTRTQAPPNVVLGVTNPFFIKTLQHWPHILRVGEPKMSGDLPKQVKLKKPSRLKTLDTKPGLYTAYTAHLHRDKALLKRLLKGVQKKRPSDVQSALLRRHLLELTQSFIIPLEHYMASLMPLQKSITPWKTPPQIQPFSQDDFLRSLEHAGPQLTCILKGDWLGLYRRFFKSPHFDGWYRQRHKEMALKLEALHLEAICEANIETWMKDKSEVEVVDLVLKLREKLVRAQGHQLPVKEATLQRAQLYIETVIGSLPKDLQAVLCPP</sequence>
<comment type="function">
    <text evidence="2">Guanine nucleotide exchange factor (GEF) for RAB14. Also has some, lesser GEF activity towards RAB35.</text>
</comment>
<comment type="subcellular location">
    <subcellularLocation>
        <location evidence="3">Recycling endosome</location>
    </subcellularLocation>
    <subcellularLocation>
        <location evidence="3">Cytoplasm</location>
    </subcellularLocation>
</comment>
<comment type="similarity">
    <text evidence="3">Belongs to the DENND6 family.</text>
</comment>
<comment type="caution">
    <text evidence="4">Identified as having similarity to the core DENN family and referred to as DENN6B (PubMed:21330364). Prediction methods do not indicate a DENN domain for this sequence and, the exact role of the DENN or this DENN-like domain in GEF activity needs to be clarified.</text>
</comment>